<keyword id="KW-0997">Cell inner membrane</keyword>
<keyword id="KW-1003">Cell membrane</keyword>
<keyword id="KW-0143">Chaperone</keyword>
<keyword id="KW-0472">Membrane</keyword>
<keyword id="KW-0653">Protein transport</keyword>
<keyword id="KW-0812">Transmembrane</keyword>
<keyword id="KW-1133">Transmembrane helix</keyword>
<keyword id="KW-0813">Transport</keyword>
<comment type="function">
    <text evidence="1">Required for the insertion and/or proper folding and/or complex formation of integral membrane proteins into the membrane. Involved in integration of membrane proteins that insert both dependently and independently of the Sec translocase complex, as well as at least some lipoproteins. Aids folding of multispanning membrane proteins.</text>
</comment>
<comment type="subunit">
    <text evidence="1">Interacts with the Sec translocase complex via SecD. Specifically interacts with transmembrane segments of nascent integral membrane proteins during membrane integration.</text>
</comment>
<comment type="subcellular location">
    <subcellularLocation>
        <location evidence="1">Cell inner membrane</location>
        <topology evidence="1">Multi-pass membrane protein</topology>
    </subcellularLocation>
</comment>
<comment type="similarity">
    <text evidence="1">Belongs to the OXA1/ALB3/YidC family. Type 1 subfamily.</text>
</comment>
<accession>B5EYX5</accession>
<dbReference type="EMBL" id="CP001138">
    <property type="protein sequence ID" value="ACH50837.1"/>
    <property type="molecule type" value="Genomic_DNA"/>
</dbReference>
<dbReference type="RefSeq" id="WP_000378278.1">
    <property type="nucleotide sequence ID" value="NC_011149.1"/>
</dbReference>
<dbReference type="SMR" id="B5EYX5"/>
<dbReference type="KEGG" id="sea:SeAg_B4069"/>
<dbReference type="HOGENOM" id="CLU_016535_3_0_6"/>
<dbReference type="Proteomes" id="UP000008819">
    <property type="component" value="Chromosome"/>
</dbReference>
<dbReference type="GO" id="GO:0005886">
    <property type="term" value="C:plasma membrane"/>
    <property type="evidence" value="ECO:0007669"/>
    <property type="project" value="UniProtKB-SubCell"/>
</dbReference>
<dbReference type="GO" id="GO:0032977">
    <property type="term" value="F:membrane insertase activity"/>
    <property type="evidence" value="ECO:0007669"/>
    <property type="project" value="InterPro"/>
</dbReference>
<dbReference type="GO" id="GO:0051205">
    <property type="term" value="P:protein insertion into membrane"/>
    <property type="evidence" value="ECO:0007669"/>
    <property type="project" value="TreeGrafter"/>
</dbReference>
<dbReference type="GO" id="GO:0015031">
    <property type="term" value="P:protein transport"/>
    <property type="evidence" value="ECO:0007669"/>
    <property type="project" value="UniProtKB-KW"/>
</dbReference>
<dbReference type="CDD" id="cd20070">
    <property type="entry name" value="5TM_YidC_Alb3"/>
    <property type="match status" value="1"/>
</dbReference>
<dbReference type="CDD" id="cd19961">
    <property type="entry name" value="EcYidC-like_peri"/>
    <property type="match status" value="1"/>
</dbReference>
<dbReference type="FunFam" id="2.70.98.90:FF:000001">
    <property type="entry name" value="Membrane protein insertase YidC"/>
    <property type="match status" value="1"/>
</dbReference>
<dbReference type="Gene3D" id="2.70.98.90">
    <property type="match status" value="1"/>
</dbReference>
<dbReference type="HAMAP" id="MF_01810">
    <property type="entry name" value="YidC_type1"/>
    <property type="match status" value="1"/>
</dbReference>
<dbReference type="InterPro" id="IPR019998">
    <property type="entry name" value="Membr_insert_YidC"/>
</dbReference>
<dbReference type="InterPro" id="IPR028053">
    <property type="entry name" value="Membr_insert_YidC_N"/>
</dbReference>
<dbReference type="InterPro" id="IPR001708">
    <property type="entry name" value="YidC/ALB3/OXA1/COX18"/>
</dbReference>
<dbReference type="InterPro" id="IPR028055">
    <property type="entry name" value="YidC/Oxa/ALB_C"/>
</dbReference>
<dbReference type="InterPro" id="IPR047196">
    <property type="entry name" value="YidC_ALB_C"/>
</dbReference>
<dbReference type="InterPro" id="IPR038221">
    <property type="entry name" value="YidC_periplasmic_sf"/>
</dbReference>
<dbReference type="NCBIfam" id="NF002351">
    <property type="entry name" value="PRK01318.1-1"/>
    <property type="match status" value="1"/>
</dbReference>
<dbReference type="NCBIfam" id="NF002352">
    <property type="entry name" value="PRK01318.1-3"/>
    <property type="match status" value="1"/>
</dbReference>
<dbReference type="NCBIfam" id="NF002353">
    <property type="entry name" value="PRK01318.1-4"/>
    <property type="match status" value="1"/>
</dbReference>
<dbReference type="NCBIfam" id="TIGR03593">
    <property type="entry name" value="yidC_nterm"/>
    <property type="match status" value="1"/>
</dbReference>
<dbReference type="NCBIfam" id="TIGR03592">
    <property type="entry name" value="yidC_oxa1_cterm"/>
    <property type="match status" value="1"/>
</dbReference>
<dbReference type="PANTHER" id="PTHR12428:SF65">
    <property type="entry name" value="CYTOCHROME C OXIDASE ASSEMBLY PROTEIN COX18, MITOCHONDRIAL"/>
    <property type="match status" value="1"/>
</dbReference>
<dbReference type="PANTHER" id="PTHR12428">
    <property type="entry name" value="OXA1"/>
    <property type="match status" value="1"/>
</dbReference>
<dbReference type="Pfam" id="PF02096">
    <property type="entry name" value="60KD_IMP"/>
    <property type="match status" value="1"/>
</dbReference>
<dbReference type="Pfam" id="PF14849">
    <property type="entry name" value="YidC_periplas"/>
    <property type="match status" value="1"/>
</dbReference>
<dbReference type="PRINTS" id="PR00701">
    <property type="entry name" value="60KDINNERMP"/>
</dbReference>
<dbReference type="PRINTS" id="PR01900">
    <property type="entry name" value="YIDCPROTEIN"/>
</dbReference>
<sequence>MDSQRNLLVIALLFVSFMIWQAWEQDKNPQPQTQQTTQTTTTAAGSAADQGVPASGQGKMITVKTDVLDLTINTRGGDVEQALLPAYPKELGSNEPFQLLETTPQFIYQAQSGLTGRDGPDNPANGPRPLYNVEKDAFVLADGQNELQVPMTYTDAAGNTFTKTFVFKRGDYAVNVNYSVQNTGEKPLEVSTFGQLKQSVNLPPHRDTGSSNFALHTFRGAAYSTPDEKYEKYKFDTIADNENLNVSSKGGWVAMLQQYFATAWIPRNDGTNNFYTANLGNGIVAIGYKAQPVLVQPGQTGAMTSTLWVGPEIQDKMAAVAPHLDLTVDYGWLWFISQPLFKLLKWIHSFVGNWGFSIIIITFIVRGIMYPLTKAQYTSMAKMRMLQPKIQAMRERLGDDKQRQSQEMMALYKAEKVNPLGGCFPLIIQMPIFLALYYMLMGSIELRHAPFALWIHDLSAQDPYYILPILMGVTMFFIQKMSPTTVTDPMQQKIMTFMPVIFTVFFLWFPSGLVLYYIVSNLVTIIQQQLIYRGLEKRGLHSREKKKS</sequence>
<feature type="chain" id="PRO_1000187696" description="Membrane protein insertase YidC">
    <location>
        <begin position="1"/>
        <end position="548"/>
    </location>
</feature>
<feature type="transmembrane region" description="Helical" evidence="1">
    <location>
        <begin position="6"/>
        <end position="26"/>
    </location>
</feature>
<feature type="transmembrane region" description="Helical" evidence="1">
    <location>
        <begin position="350"/>
        <end position="370"/>
    </location>
</feature>
<feature type="transmembrane region" description="Helical" evidence="1">
    <location>
        <begin position="424"/>
        <end position="444"/>
    </location>
</feature>
<feature type="transmembrane region" description="Helical" evidence="1">
    <location>
        <begin position="458"/>
        <end position="478"/>
    </location>
</feature>
<feature type="transmembrane region" description="Helical" evidence="1">
    <location>
        <begin position="499"/>
        <end position="519"/>
    </location>
</feature>
<feature type="region of interest" description="Disordered" evidence="2">
    <location>
        <begin position="28"/>
        <end position="56"/>
    </location>
</feature>
<feature type="compositionally biased region" description="Low complexity" evidence="2">
    <location>
        <begin position="29"/>
        <end position="42"/>
    </location>
</feature>
<protein>
    <recommendedName>
        <fullName evidence="1">Membrane protein insertase YidC</fullName>
    </recommendedName>
    <alternativeName>
        <fullName evidence="1">Foldase YidC</fullName>
    </alternativeName>
    <alternativeName>
        <fullName evidence="1">Membrane integrase YidC</fullName>
    </alternativeName>
    <alternativeName>
        <fullName evidence="1">Membrane protein YidC</fullName>
    </alternativeName>
</protein>
<evidence type="ECO:0000255" key="1">
    <source>
        <dbReference type="HAMAP-Rule" id="MF_01810"/>
    </source>
</evidence>
<evidence type="ECO:0000256" key="2">
    <source>
        <dbReference type="SAM" id="MobiDB-lite"/>
    </source>
</evidence>
<name>YIDC_SALA4</name>
<gene>
    <name evidence="1" type="primary">yidC</name>
    <name type="ordered locus">SeAg_B4069</name>
</gene>
<organism>
    <name type="scientific">Salmonella agona (strain SL483)</name>
    <dbReference type="NCBI Taxonomy" id="454166"/>
    <lineage>
        <taxon>Bacteria</taxon>
        <taxon>Pseudomonadati</taxon>
        <taxon>Pseudomonadota</taxon>
        <taxon>Gammaproteobacteria</taxon>
        <taxon>Enterobacterales</taxon>
        <taxon>Enterobacteriaceae</taxon>
        <taxon>Salmonella</taxon>
    </lineage>
</organism>
<proteinExistence type="inferred from homology"/>
<reference key="1">
    <citation type="journal article" date="2011" name="J. Bacteriol.">
        <title>Comparative genomics of 28 Salmonella enterica isolates: evidence for CRISPR-mediated adaptive sublineage evolution.</title>
        <authorList>
            <person name="Fricke W.F."/>
            <person name="Mammel M.K."/>
            <person name="McDermott P.F."/>
            <person name="Tartera C."/>
            <person name="White D.G."/>
            <person name="Leclerc J.E."/>
            <person name="Ravel J."/>
            <person name="Cebula T.A."/>
        </authorList>
    </citation>
    <scope>NUCLEOTIDE SEQUENCE [LARGE SCALE GENOMIC DNA]</scope>
    <source>
        <strain>SL483</strain>
    </source>
</reference>